<comment type="function">
    <text evidence="1">Transfers the 4'-phosphopantetheine moiety from coenzyme A to a Ser of acyl-carrier-protein.</text>
</comment>
<comment type="catalytic activity">
    <reaction evidence="1">
        <text>apo-[ACP] + CoA = holo-[ACP] + adenosine 3',5'-bisphosphate + H(+)</text>
        <dbReference type="Rhea" id="RHEA:12068"/>
        <dbReference type="Rhea" id="RHEA-COMP:9685"/>
        <dbReference type="Rhea" id="RHEA-COMP:9690"/>
        <dbReference type="ChEBI" id="CHEBI:15378"/>
        <dbReference type="ChEBI" id="CHEBI:29999"/>
        <dbReference type="ChEBI" id="CHEBI:57287"/>
        <dbReference type="ChEBI" id="CHEBI:58343"/>
        <dbReference type="ChEBI" id="CHEBI:64479"/>
        <dbReference type="EC" id="2.7.8.7"/>
    </reaction>
</comment>
<comment type="cofactor">
    <cofactor evidence="1">
        <name>Mg(2+)</name>
        <dbReference type="ChEBI" id="CHEBI:18420"/>
    </cofactor>
</comment>
<comment type="subcellular location">
    <subcellularLocation>
        <location evidence="1">Cytoplasm</location>
    </subcellularLocation>
</comment>
<comment type="similarity">
    <text evidence="1">Belongs to the P-Pant transferase superfamily. AcpS family.</text>
</comment>
<proteinExistence type="inferred from homology"/>
<name>ACPS_TREPA</name>
<dbReference type="EC" id="2.7.8.7" evidence="1"/>
<dbReference type="EMBL" id="AE000520">
    <property type="protein sequence ID" value="AAC65794.1"/>
    <property type="molecule type" value="Genomic_DNA"/>
</dbReference>
<dbReference type="PIR" id="F71276">
    <property type="entry name" value="F71276"/>
</dbReference>
<dbReference type="RefSeq" id="WP_010882272.1">
    <property type="nucleotide sequence ID" value="NC_021490.2"/>
</dbReference>
<dbReference type="SMR" id="O83800"/>
<dbReference type="STRING" id="243276.TP_0828"/>
<dbReference type="EnsemblBacteria" id="AAC65794">
    <property type="protein sequence ID" value="AAC65794"/>
    <property type="gene ID" value="TP_0828"/>
</dbReference>
<dbReference type="KEGG" id="tpa:TP_0828"/>
<dbReference type="KEGG" id="tpw:TPANIC_0828"/>
<dbReference type="eggNOG" id="COG0736">
    <property type="taxonomic scope" value="Bacteria"/>
</dbReference>
<dbReference type="HOGENOM" id="CLU_089696_3_1_12"/>
<dbReference type="OrthoDB" id="517356at2"/>
<dbReference type="Proteomes" id="UP000000811">
    <property type="component" value="Chromosome"/>
</dbReference>
<dbReference type="GO" id="GO:0005737">
    <property type="term" value="C:cytoplasm"/>
    <property type="evidence" value="ECO:0007669"/>
    <property type="project" value="UniProtKB-SubCell"/>
</dbReference>
<dbReference type="GO" id="GO:0008897">
    <property type="term" value="F:holo-[acyl-carrier-protein] synthase activity"/>
    <property type="evidence" value="ECO:0007669"/>
    <property type="project" value="UniProtKB-UniRule"/>
</dbReference>
<dbReference type="GO" id="GO:0000287">
    <property type="term" value="F:magnesium ion binding"/>
    <property type="evidence" value="ECO:0007669"/>
    <property type="project" value="UniProtKB-UniRule"/>
</dbReference>
<dbReference type="GO" id="GO:0006633">
    <property type="term" value="P:fatty acid biosynthetic process"/>
    <property type="evidence" value="ECO:0007669"/>
    <property type="project" value="UniProtKB-UniRule"/>
</dbReference>
<dbReference type="Gene3D" id="3.90.470.20">
    <property type="entry name" value="4'-phosphopantetheinyl transferase domain"/>
    <property type="match status" value="1"/>
</dbReference>
<dbReference type="HAMAP" id="MF_00101">
    <property type="entry name" value="AcpS"/>
    <property type="match status" value="1"/>
</dbReference>
<dbReference type="InterPro" id="IPR008278">
    <property type="entry name" value="4-PPantetheinyl_Trfase_dom"/>
</dbReference>
<dbReference type="InterPro" id="IPR037143">
    <property type="entry name" value="4-PPantetheinyl_Trfase_dom_sf"/>
</dbReference>
<dbReference type="InterPro" id="IPR002582">
    <property type="entry name" value="ACPS"/>
</dbReference>
<dbReference type="InterPro" id="IPR004568">
    <property type="entry name" value="Ppantetheine-prot_Trfase_dom"/>
</dbReference>
<dbReference type="NCBIfam" id="TIGR00516">
    <property type="entry name" value="acpS"/>
    <property type="match status" value="1"/>
</dbReference>
<dbReference type="NCBIfam" id="TIGR00556">
    <property type="entry name" value="pantethn_trn"/>
    <property type="match status" value="1"/>
</dbReference>
<dbReference type="NCBIfam" id="NF000832">
    <property type="entry name" value="PRK00070.3-2"/>
    <property type="match status" value="1"/>
</dbReference>
<dbReference type="Pfam" id="PF01648">
    <property type="entry name" value="ACPS"/>
    <property type="match status" value="1"/>
</dbReference>
<dbReference type="SUPFAM" id="SSF56214">
    <property type="entry name" value="4'-phosphopantetheinyl transferase"/>
    <property type="match status" value="1"/>
</dbReference>
<evidence type="ECO:0000255" key="1">
    <source>
        <dbReference type="HAMAP-Rule" id="MF_00101"/>
    </source>
</evidence>
<sequence>MIIGVGIDIVEIERFVSWTHNVRLLRRFFHQEEIVDFFKNHMRAQFLATRFAAKEAFGKALGTGLRNMELRNIRVCQNGWGKPRLEVYGAAQAMLAATGGTHIQVSLTHEREVASAIVIIEGEPL</sequence>
<reference key="1">
    <citation type="journal article" date="1998" name="Science">
        <title>Complete genome sequence of Treponema pallidum, the syphilis spirochete.</title>
        <authorList>
            <person name="Fraser C.M."/>
            <person name="Norris S.J."/>
            <person name="Weinstock G.M."/>
            <person name="White O."/>
            <person name="Sutton G.G."/>
            <person name="Dodson R.J."/>
            <person name="Gwinn M.L."/>
            <person name="Hickey E.K."/>
            <person name="Clayton R.A."/>
            <person name="Ketchum K.A."/>
            <person name="Sodergren E."/>
            <person name="Hardham J.M."/>
            <person name="McLeod M.P."/>
            <person name="Salzberg S.L."/>
            <person name="Peterson J.D."/>
            <person name="Khalak H.G."/>
            <person name="Richardson D.L."/>
            <person name="Howell J.K."/>
            <person name="Chidambaram M."/>
            <person name="Utterback T.R."/>
            <person name="McDonald L.A."/>
            <person name="Artiach P."/>
            <person name="Bowman C."/>
            <person name="Cotton M.D."/>
            <person name="Fujii C."/>
            <person name="Garland S.A."/>
            <person name="Hatch B."/>
            <person name="Horst K."/>
            <person name="Roberts K.M."/>
            <person name="Sandusky M."/>
            <person name="Weidman J.F."/>
            <person name="Smith H.O."/>
            <person name="Venter J.C."/>
        </authorList>
    </citation>
    <scope>NUCLEOTIDE SEQUENCE [LARGE SCALE GENOMIC DNA]</scope>
    <source>
        <strain>Nichols</strain>
    </source>
</reference>
<protein>
    <recommendedName>
        <fullName evidence="1">Holo-[acyl-carrier-protein] synthase</fullName>
        <shortName evidence="1">Holo-ACP synthase</shortName>
        <ecNumber evidence="1">2.7.8.7</ecNumber>
    </recommendedName>
    <alternativeName>
        <fullName evidence="1">4'-phosphopantetheinyl transferase AcpS</fullName>
    </alternativeName>
</protein>
<keyword id="KW-0963">Cytoplasm</keyword>
<keyword id="KW-0275">Fatty acid biosynthesis</keyword>
<keyword id="KW-0276">Fatty acid metabolism</keyword>
<keyword id="KW-0444">Lipid biosynthesis</keyword>
<keyword id="KW-0443">Lipid metabolism</keyword>
<keyword id="KW-0460">Magnesium</keyword>
<keyword id="KW-0479">Metal-binding</keyword>
<keyword id="KW-1185">Reference proteome</keyword>
<keyword id="KW-0808">Transferase</keyword>
<gene>
    <name evidence="1" type="primary">acpS</name>
    <name type="ordered locus">TP_0828</name>
</gene>
<accession>O83800</accession>
<organism>
    <name type="scientific">Treponema pallidum (strain Nichols)</name>
    <dbReference type="NCBI Taxonomy" id="243276"/>
    <lineage>
        <taxon>Bacteria</taxon>
        <taxon>Pseudomonadati</taxon>
        <taxon>Spirochaetota</taxon>
        <taxon>Spirochaetia</taxon>
        <taxon>Spirochaetales</taxon>
        <taxon>Treponemataceae</taxon>
        <taxon>Treponema</taxon>
    </lineage>
</organism>
<feature type="chain" id="PRO_0000175724" description="Holo-[acyl-carrier-protein] synthase">
    <location>
        <begin position="1"/>
        <end position="125"/>
    </location>
</feature>
<feature type="binding site" evidence="1">
    <location>
        <position position="8"/>
    </location>
    <ligand>
        <name>Mg(2+)</name>
        <dbReference type="ChEBI" id="CHEBI:18420"/>
    </ligand>
</feature>
<feature type="binding site" evidence="1">
    <location>
        <position position="55"/>
    </location>
    <ligand>
        <name>Mg(2+)</name>
        <dbReference type="ChEBI" id="CHEBI:18420"/>
    </ligand>
</feature>